<name>Y1473_BRADU</name>
<evidence type="ECO:0000305" key="1"/>
<gene>
    <name type="ordered locus">bsl1473</name>
</gene>
<feature type="chain" id="PRO_0000209993" description="UPF0337 protein bsl1473">
    <location>
        <begin position="1"/>
        <end position="66"/>
    </location>
</feature>
<proteinExistence type="inferred from homology"/>
<keyword id="KW-1185">Reference proteome</keyword>
<protein>
    <recommendedName>
        <fullName>UPF0337 protein bsl1473</fullName>
    </recommendedName>
</protein>
<comment type="similarity">
    <text evidence="1">Belongs to the UPF0337 (CsbD) family.</text>
</comment>
<comment type="sequence caution" evidence="1">
    <conflict type="erroneous initiation">
        <sequence resource="EMBL-CDS" id="BAC46738"/>
    </conflict>
</comment>
<organism>
    <name type="scientific">Bradyrhizobium diazoefficiens (strain JCM 10833 / BCRC 13528 / IAM 13628 / NBRC 14792 / USDA 110)</name>
    <dbReference type="NCBI Taxonomy" id="224911"/>
    <lineage>
        <taxon>Bacteria</taxon>
        <taxon>Pseudomonadati</taxon>
        <taxon>Pseudomonadota</taxon>
        <taxon>Alphaproteobacteria</taxon>
        <taxon>Hyphomicrobiales</taxon>
        <taxon>Nitrobacteraceae</taxon>
        <taxon>Bradyrhizobium</taxon>
    </lineage>
</organism>
<reference key="1">
    <citation type="journal article" date="2002" name="DNA Res.">
        <title>Complete genomic sequence of nitrogen-fixing symbiotic bacterium Bradyrhizobium japonicum USDA110.</title>
        <authorList>
            <person name="Kaneko T."/>
            <person name="Nakamura Y."/>
            <person name="Sato S."/>
            <person name="Minamisawa K."/>
            <person name="Uchiumi T."/>
            <person name="Sasamoto S."/>
            <person name="Watanabe A."/>
            <person name="Idesawa K."/>
            <person name="Iriguchi M."/>
            <person name="Kawashima K."/>
            <person name="Kohara M."/>
            <person name="Matsumoto M."/>
            <person name="Shimpo S."/>
            <person name="Tsuruoka H."/>
            <person name="Wada T."/>
            <person name="Yamada M."/>
            <person name="Tabata S."/>
        </authorList>
    </citation>
    <scope>NUCLEOTIDE SEQUENCE [LARGE SCALE GENOMIC DNA]</scope>
    <source>
        <strain>JCM 10833 / BCRC 13528 / IAM 13628 / NBRC 14792 / USDA 110</strain>
    </source>
</reference>
<dbReference type="EMBL" id="BA000040">
    <property type="protein sequence ID" value="BAC46738.1"/>
    <property type="status" value="ALT_INIT"/>
    <property type="molecule type" value="Genomic_DNA"/>
</dbReference>
<dbReference type="RefSeq" id="NP_768113.1">
    <property type="nucleotide sequence ID" value="NC_004463.1"/>
</dbReference>
<dbReference type="RefSeq" id="WP_027544225.1">
    <property type="nucleotide sequence ID" value="NC_004463.1"/>
</dbReference>
<dbReference type="SMR" id="Q89UE4"/>
<dbReference type="FunCoup" id="Q89UE4">
    <property type="interactions" value="102"/>
</dbReference>
<dbReference type="STRING" id="224911.AAV28_04315"/>
<dbReference type="EnsemblBacteria" id="BAC46738">
    <property type="protein sequence ID" value="BAC46738"/>
    <property type="gene ID" value="BAC46738"/>
</dbReference>
<dbReference type="GeneID" id="46488749"/>
<dbReference type="KEGG" id="bja:bsl1473"/>
<dbReference type="PATRIC" id="fig|224911.44.peg.907"/>
<dbReference type="eggNOG" id="COG3237">
    <property type="taxonomic scope" value="Bacteria"/>
</dbReference>
<dbReference type="HOGENOM" id="CLU_135567_4_1_5"/>
<dbReference type="InParanoid" id="Q89UE4"/>
<dbReference type="OrthoDB" id="9796058at2"/>
<dbReference type="Proteomes" id="UP000002526">
    <property type="component" value="Chromosome"/>
</dbReference>
<dbReference type="Gene3D" id="1.10.1470.10">
    <property type="entry name" value="YjbJ"/>
    <property type="match status" value="1"/>
</dbReference>
<dbReference type="InterPro" id="IPR008462">
    <property type="entry name" value="CsbD"/>
</dbReference>
<dbReference type="InterPro" id="IPR050423">
    <property type="entry name" value="UPF0337_stress_rsp"/>
</dbReference>
<dbReference type="InterPro" id="IPR026042">
    <property type="entry name" value="YjbJ"/>
</dbReference>
<dbReference type="InterPro" id="IPR036629">
    <property type="entry name" value="YjbJ_sf"/>
</dbReference>
<dbReference type="PANTHER" id="PTHR34977">
    <property type="entry name" value="UPF0337 PROTEIN YJBJ"/>
    <property type="match status" value="1"/>
</dbReference>
<dbReference type="PANTHER" id="PTHR34977:SF1">
    <property type="entry name" value="UPF0337 PROTEIN YJBJ"/>
    <property type="match status" value="1"/>
</dbReference>
<dbReference type="Pfam" id="PF05532">
    <property type="entry name" value="CsbD"/>
    <property type="match status" value="1"/>
</dbReference>
<dbReference type="PIRSF" id="PIRSF039008">
    <property type="entry name" value="YjbJ"/>
    <property type="match status" value="1"/>
</dbReference>
<dbReference type="SUPFAM" id="SSF69047">
    <property type="entry name" value="Hypothetical protein YjbJ"/>
    <property type="match status" value="1"/>
</dbReference>
<sequence>MDWNRIEGNWKQFKGSAKEKWAKLTDDDLKLIEGRREQLEGRLQERYGKAKDQVRQDVDDWLKTLH</sequence>
<accession>Q89UE4</accession>